<gene>
    <name type="primary">hdcB</name>
</gene>
<sequence>MSNSNYQVSLERIKKVVPEELLTNALLAAIDNSGERMSQIIVDKKDNGNDYYLTIHRFFVYSNEEFTAFDKEDVADVEFVNGTPDGEVIITLKDGKVLHPSHICYGRAFDFIQDVKPKVITMAGYDSTIRGEFPQLLDPDHAEEIDRLRRWMQDGNISHYEYDDANPAYPKAGK</sequence>
<accession>P09111</accession>
<protein>
    <recommendedName>
        <fullName>Protein HdcB</fullName>
    </recommendedName>
</protein>
<keyword id="KW-0369">Histidine metabolism</keyword>
<feature type="chain" id="PRO_0000083933" description="Protein HdcB">
    <location>
        <begin position="1"/>
        <end position="174"/>
    </location>
</feature>
<name>HDCB_LACS3</name>
<organism>
    <name type="scientific">Lactobacillus sp. (strain 30a)</name>
    <dbReference type="NCBI Taxonomy" id="1593"/>
    <lineage>
        <taxon>Bacteria</taxon>
        <taxon>Bacillati</taxon>
        <taxon>Bacillota</taxon>
        <taxon>Bacilli</taxon>
        <taxon>Lactobacillales</taxon>
        <taxon>Lactobacillaceae</taxon>
        <taxon>Lactobacillus</taxon>
    </lineage>
</organism>
<proteinExistence type="predicted"/>
<dbReference type="EMBL" id="X13099">
    <property type="protein sequence ID" value="CAA31491.1"/>
    <property type="molecule type" value="Genomic_DNA"/>
</dbReference>
<dbReference type="PIR" id="JQ0185">
    <property type="entry name" value="JQ0185"/>
</dbReference>
<dbReference type="GO" id="GO:0006547">
    <property type="term" value="P:L-histidine metabolic process"/>
    <property type="evidence" value="ECO:0007669"/>
    <property type="project" value="UniProtKB-KW"/>
</dbReference>
<dbReference type="InterPro" id="IPR035227">
    <property type="entry name" value="HdcB"/>
</dbReference>
<dbReference type="Pfam" id="PF17528">
    <property type="entry name" value="HdcB"/>
    <property type="match status" value="1"/>
</dbReference>
<reference key="1">
    <citation type="journal article" date="1989" name="Gene">
        <title>The molecular cloning, sequence and expression of the hdcB gene from Lactobacillus 30A.</title>
        <authorList>
            <person name="Copeland W.C."/>
            <person name="Domena J.D."/>
            <person name="Robertus J.D."/>
        </authorList>
    </citation>
    <scope>NUCLEOTIDE SEQUENCE [GENOMIC DNA]</scope>
</reference>